<gene>
    <name evidence="1" type="primary">arcA</name>
    <name type="ordered locus">Dshi_0432</name>
</gene>
<accession>A8LN36</accession>
<dbReference type="EC" id="3.5.3.6" evidence="1"/>
<dbReference type="EMBL" id="CP000830">
    <property type="protein sequence ID" value="ABV92180.1"/>
    <property type="molecule type" value="Genomic_DNA"/>
</dbReference>
<dbReference type="RefSeq" id="WP_012177110.1">
    <property type="nucleotide sequence ID" value="NC_009952.1"/>
</dbReference>
<dbReference type="SMR" id="A8LN36"/>
<dbReference type="STRING" id="398580.Dshi_0432"/>
<dbReference type="KEGG" id="dsh:Dshi_0432"/>
<dbReference type="eggNOG" id="COG2235">
    <property type="taxonomic scope" value="Bacteria"/>
</dbReference>
<dbReference type="HOGENOM" id="CLU_052662_0_0_5"/>
<dbReference type="OrthoDB" id="9807502at2"/>
<dbReference type="UniPathway" id="UPA00254">
    <property type="reaction ID" value="UER00364"/>
</dbReference>
<dbReference type="Proteomes" id="UP000006833">
    <property type="component" value="Chromosome"/>
</dbReference>
<dbReference type="GO" id="GO:0005737">
    <property type="term" value="C:cytoplasm"/>
    <property type="evidence" value="ECO:0007669"/>
    <property type="project" value="UniProtKB-SubCell"/>
</dbReference>
<dbReference type="GO" id="GO:0016990">
    <property type="term" value="F:arginine deiminase activity"/>
    <property type="evidence" value="ECO:0007669"/>
    <property type="project" value="UniProtKB-UniRule"/>
</dbReference>
<dbReference type="GO" id="GO:0019547">
    <property type="term" value="P:arginine catabolic process to ornithine"/>
    <property type="evidence" value="ECO:0007669"/>
    <property type="project" value="UniProtKB-UniRule"/>
</dbReference>
<dbReference type="GO" id="GO:0019546">
    <property type="term" value="P:arginine deiminase pathway"/>
    <property type="evidence" value="ECO:0007669"/>
    <property type="project" value="TreeGrafter"/>
</dbReference>
<dbReference type="Gene3D" id="1.10.3930.10">
    <property type="entry name" value="Arginine deiminase"/>
    <property type="match status" value="1"/>
</dbReference>
<dbReference type="Gene3D" id="3.75.10.10">
    <property type="entry name" value="L-arginine/glycine Amidinotransferase, Chain A"/>
    <property type="match status" value="1"/>
</dbReference>
<dbReference type="HAMAP" id="MF_00242">
    <property type="entry name" value="Arg_deiminase"/>
    <property type="match status" value="1"/>
</dbReference>
<dbReference type="InterPro" id="IPR003876">
    <property type="entry name" value="Arg_deiminase"/>
</dbReference>
<dbReference type="NCBIfam" id="NF002381">
    <property type="entry name" value="PRK01388.1"/>
    <property type="match status" value="1"/>
</dbReference>
<dbReference type="PANTHER" id="PTHR47271">
    <property type="entry name" value="ARGININE DEIMINASE"/>
    <property type="match status" value="1"/>
</dbReference>
<dbReference type="PANTHER" id="PTHR47271:SF3">
    <property type="entry name" value="ARGININE DEIMINASE"/>
    <property type="match status" value="1"/>
</dbReference>
<dbReference type="Pfam" id="PF02274">
    <property type="entry name" value="ADI"/>
    <property type="match status" value="1"/>
</dbReference>
<dbReference type="PIRSF" id="PIRSF006356">
    <property type="entry name" value="Arg_deiminase"/>
    <property type="match status" value="1"/>
</dbReference>
<dbReference type="PRINTS" id="PR01466">
    <property type="entry name" value="ARGDEIMINASE"/>
</dbReference>
<dbReference type="SUPFAM" id="SSF55909">
    <property type="entry name" value="Pentein"/>
    <property type="match status" value="1"/>
</dbReference>
<reference key="1">
    <citation type="journal article" date="2010" name="ISME J.">
        <title>The complete genome sequence of the algal symbiont Dinoroseobacter shibae: a hitchhiker's guide to life in the sea.</title>
        <authorList>
            <person name="Wagner-Dobler I."/>
            <person name="Ballhausen B."/>
            <person name="Berger M."/>
            <person name="Brinkhoff T."/>
            <person name="Buchholz I."/>
            <person name="Bunk B."/>
            <person name="Cypionka H."/>
            <person name="Daniel R."/>
            <person name="Drepper T."/>
            <person name="Gerdts G."/>
            <person name="Hahnke S."/>
            <person name="Han C."/>
            <person name="Jahn D."/>
            <person name="Kalhoefer D."/>
            <person name="Kiss H."/>
            <person name="Klenk H.P."/>
            <person name="Kyrpides N."/>
            <person name="Liebl W."/>
            <person name="Liesegang H."/>
            <person name="Meincke L."/>
            <person name="Pati A."/>
            <person name="Petersen J."/>
            <person name="Piekarski T."/>
            <person name="Pommerenke C."/>
            <person name="Pradella S."/>
            <person name="Pukall R."/>
            <person name="Rabus R."/>
            <person name="Stackebrandt E."/>
            <person name="Thole S."/>
            <person name="Thompson L."/>
            <person name="Tielen P."/>
            <person name="Tomasch J."/>
            <person name="von Jan M."/>
            <person name="Wanphrut N."/>
            <person name="Wichels A."/>
            <person name="Zech H."/>
            <person name="Simon M."/>
        </authorList>
    </citation>
    <scope>NUCLEOTIDE SEQUENCE [LARGE SCALE GENOMIC DNA]</scope>
    <source>
        <strain>DSM 16493 / NCIMB 14021 / DFL 12</strain>
    </source>
</reference>
<name>ARCA_DINSH</name>
<proteinExistence type="inferred from homology"/>
<protein>
    <recommendedName>
        <fullName evidence="1">Arginine deiminase</fullName>
        <shortName evidence="1">ADI</shortName>
        <ecNumber evidence="1">3.5.3.6</ecNumber>
    </recommendedName>
    <alternativeName>
        <fullName evidence="1">Arginine dihydrolase</fullName>
        <shortName evidence="1">AD</shortName>
    </alternativeName>
</protein>
<organism>
    <name type="scientific">Dinoroseobacter shibae (strain DSM 16493 / NCIMB 14021 / DFL 12)</name>
    <dbReference type="NCBI Taxonomy" id="398580"/>
    <lineage>
        <taxon>Bacteria</taxon>
        <taxon>Pseudomonadati</taxon>
        <taxon>Pseudomonadota</taxon>
        <taxon>Alphaproteobacteria</taxon>
        <taxon>Rhodobacterales</taxon>
        <taxon>Roseobacteraceae</taxon>
        <taxon>Dinoroseobacter</taxon>
    </lineage>
</organism>
<sequence>MTAHKLGVHSETGTLRQVIICRPGLAHRRLTPENCEELLFDDVFWVKQAKQDHEAFGAAMTQEGVEVLETGALLGETLEIPEARKWVLDHRISANDVGVGMRKDLRDWMDELPGTELATWLIGGLTVGDVPFEATSMFGAYLGRHGFILPPLPNFLFTRDNSSWVYGGVTLNPMYWQARRPETLLTAAIYRYHPKFAGKVHEIWADPLKNHGLATLEGGDVMPVGNGLVLVGMGERTSPQGVGLMAQALFGEGRATRVIACQMPKSRAAMHLDTVFTFCGDNIVTSFKEVADEMTCYDLHPGEGDKPLDMRHDTRPMFEVVAEAMGFKKLNVVPTGGSDPFEQSREQWNDGNNVLALRPGVVMGYDRNDDTNAALRAEGIKVIELPGAELGRGRGGSRCMSCPTIRDAV</sequence>
<comment type="catalytic activity">
    <reaction evidence="1">
        <text>L-arginine + H2O = L-citrulline + NH4(+)</text>
        <dbReference type="Rhea" id="RHEA:19597"/>
        <dbReference type="ChEBI" id="CHEBI:15377"/>
        <dbReference type="ChEBI" id="CHEBI:28938"/>
        <dbReference type="ChEBI" id="CHEBI:32682"/>
        <dbReference type="ChEBI" id="CHEBI:57743"/>
        <dbReference type="EC" id="3.5.3.6"/>
    </reaction>
</comment>
<comment type="pathway">
    <text evidence="1">Amino-acid degradation; L-arginine degradation via ADI pathway; carbamoyl phosphate from L-arginine: step 1/2.</text>
</comment>
<comment type="subcellular location">
    <subcellularLocation>
        <location evidence="1">Cytoplasm</location>
    </subcellularLocation>
</comment>
<comment type="similarity">
    <text evidence="1">Belongs to the arginine deiminase family.</text>
</comment>
<keyword id="KW-0056">Arginine metabolism</keyword>
<keyword id="KW-0963">Cytoplasm</keyword>
<keyword id="KW-0378">Hydrolase</keyword>
<keyword id="KW-1185">Reference proteome</keyword>
<evidence type="ECO:0000255" key="1">
    <source>
        <dbReference type="HAMAP-Rule" id="MF_00242"/>
    </source>
</evidence>
<feature type="chain" id="PRO_0000336663" description="Arginine deiminase">
    <location>
        <begin position="1"/>
        <end position="409"/>
    </location>
</feature>
<feature type="active site" description="Amidino-cysteine intermediate" evidence="1">
    <location>
        <position position="399"/>
    </location>
</feature>